<feature type="chain" id="PRO_0000165840" description="Peptidase B">
    <location>
        <begin position="1"/>
        <end position="427"/>
    </location>
</feature>
<feature type="active site" evidence="1">
    <location>
        <position position="207"/>
    </location>
</feature>
<feature type="active site" evidence="1">
    <location>
        <position position="281"/>
    </location>
</feature>
<feature type="binding site" evidence="1">
    <location>
        <position position="195"/>
    </location>
    <ligand>
        <name>Mn(2+)</name>
        <dbReference type="ChEBI" id="CHEBI:29035"/>
        <label>2</label>
    </ligand>
</feature>
<feature type="binding site" evidence="1">
    <location>
        <position position="200"/>
    </location>
    <ligand>
        <name>Mn(2+)</name>
        <dbReference type="ChEBI" id="CHEBI:29035"/>
        <label>1</label>
    </ligand>
</feature>
<feature type="binding site" evidence="1">
    <location>
        <position position="200"/>
    </location>
    <ligand>
        <name>Mn(2+)</name>
        <dbReference type="ChEBI" id="CHEBI:29035"/>
        <label>2</label>
    </ligand>
</feature>
<feature type="binding site" evidence="1">
    <location>
        <position position="218"/>
    </location>
    <ligand>
        <name>Mn(2+)</name>
        <dbReference type="ChEBI" id="CHEBI:29035"/>
        <label>2</label>
    </ligand>
</feature>
<feature type="binding site" evidence="1">
    <location>
        <position position="277"/>
    </location>
    <ligand>
        <name>Mn(2+)</name>
        <dbReference type="ChEBI" id="CHEBI:29035"/>
        <label>1</label>
    </ligand>
</feature>
<feature type="binding site" evidence="1">
    <location>
        <position position="279"/>
    </location>
    <ligand>
        <name>Mn(2+)</name>
        <dbReference type="ChEBI" id="CHEBI:29035"/>
        <label>1</label>
    </ligand>
</feature>
<feature type="binding site" evidence="1">
    <location>
        <position position="279"/>
    </location>
    <ligand>
        <name>Mn(2+)</name>
        <dbReference type="ChEBI" id="CHEBI:29035"/>
        <label>2</label>
    </ligand>
</feature>
<protein>
    <recommendedName>
        <fullName evidence="1">Peptidase B</fullName>
        <ecNumber evidence="1">3.4.11.23</ecNumber>
    </recommendedName>
    <alternativeName>
        <fullName evidence="1">Aminopeptidase B</fullName>
    </alternativeName>
</protein>
<reference key="1">
    <citation type="journal article" date="2005" name="Nucleic Acids Res.">
        <title>The genome sequence of Salmonella enterica serovar Choleraesuis, a highly invasive and resistant zoonotic pathogen.</title>
        <authorList>
            <person name="Chiu C.-H."/>
            <person name="Tang P."/>
            <person name="Chu C."/>
            <person name="Hu S."/>
            <person name="Bao Q."/>
            <person name="Yu J."/>
            <person name="Chou Y.-Y."/>
            <person name="Wang H.-S."/>
            <person name="Lee Y.-S."/>
        </authorList>
    </citation>
    <scope>NUCLEOTIDE SEQUENCE [LARGE SCALE GENOMIC DNA]</scope>
    <source>
        <strain>SC-B67</strain>
    </source>
</reference>
<dbReference type="EC" id="3.4.11.23" evidence="1"/>
<dbReference type="EMBL" id="AE017220">
    <property type="protein sequence ID" value="AAX66437.1"/>
    <property type="status" value="ALT_INIT"/>
    <property type="molecule type" value="Genomic_DNA"/>
</dbReference>
<dbReference type="RefSeq" id="WP_011264349.1">
    <property type="nucleotide sequence ID" value="NC_006905.1"/>
</dbReference>
<dbReference type="SMR" id="Q57LH5"/>
<dbReference type="MEROPS" id="M17.004"/>
<dbReference type="KEGG" id="sec:SCH_2531"/>
<dbReference type="HOGENOM" id="CLU_013734_7_1_6"/>
<dbReference type="Proteomes" id="UP000000538">
    <property type="component" value="Chromosome"/>
</dbReference>
<dbReference type="GO" id="GO:0005737">
    <property type="term" value="C:cytoplasm"/>
    <property type="evidence" value="ECO:0007669"/>
    <property type="project" value="UniProtKB-SubCell"/>
</dbReference>
<dbReference type="GO" id="GO:0030145">
    <property type="term" value="F:manganese ion binding"/>
    <property type="evidence" value="ECO:0007669"/>
    <property type="project" value="UniProtKB-UniRule"/>
</dbReference>
<dbReference type="GO" id="GO:0070006">
    <property type="term" value="F:metalloaminopeptidase activity"/>
    <property type="evidence" value="ECO:0007669"/>
    <property type="project" value="InterPro"/>
</dbReference>
<dbReference type="GO" id="GO:0006508">
    <property type="term" value="P:proteolysis"/>
    <property type="evidence" value="ECO:0007669"/>
    <property type="project" value="UniProtKB-UniRule"/>
</dbReference>
<dbReference type="CDD" id="cd00433">
    <property type="entry name" value="Peptidase_M17"/>
    <property type="match status" value="1"/>
</dbReference>
<dbReference type="FunFam" id="3.40.630.10:FF:000037">
    <property type="entry name" value="Peptidase B"/>
    <property type="match status" value="1"/>
</dbReference>
<dbReference type="Gene3D" id="3.40.630.10">
    <property type="entry name" value="Zn peptidases"/>
    <property type="match status" value="1"/>
</dbReference>
<dbReference type="HAMAP" id="MF_00504">
    <property type="entry name" value="Aminopeptidase_M17"/>
    <property type="match status" value="1"/>
</dbReference>
<dbReference type="InterPro" id="IPR011356">
    <property type="entry name" value="Leucine_aapep/pepB"/>
</dbReference>
<dbReference type="InterPro" id="IPR047620">
    <property type="entry name" value="M17_PepB-like_N"/>
</dbReference>
<dbReference type="InterPro" id="IPR008330">
    <property type="entry name" value="Pept_M17_PepB"/>
</dbReference>
<dbReference type="InterPro" id="IPR000819">
    <property type="entry name" value="Peptidase_M17_C"/>
</dbReference>
<dbReference type="NCBIfam" id="NF003450">
    <property type="entry name" value="PRK05015.1"/>
    <property type="match status" value="1"/>
</dbReference>
<dbReference type="PANTHER" id="PTHR11963">
    <property type="entry name" value="LEUCINE AMINOPEPTIDASE-RELATED"/>
    <property type="match status" value="1"/>
</dbReference>
<dbReference type="PANTHER" id="PTHR11963:SF20">
    <property type="entry name" value="PEPTIDASE B"/>
    <property type="match status" value="1"/>
</dbReference>
<dbReference type="Pfam" id="PF12404">
    <property type="entry name" value="DUF3663"/>
    <property type="match status" value="1"/>
</dbReference>
<dbReference type="Pfam" id="PF00883">
    <property type="entry name" value="Peptidase_M17"/>
    <property type="match status" value="1"/>
</dbReference>
<dbReference type="PIRSF" id="PIRSF036388">
    <property type="entry name" value="Ctsl_amnpptdse_B"/>
    <property type="match status" value="1"/>
</dbReference>
<dbReference type="PRINTS" id="PR00481">
    <property type="entry name" value="LAMNOPPTDASE"/>
</dbReference>
<dbReference type="SUPFAM" id="SSF53187">
    <property type="entry name" value="Zn-dependent exopeptidases"/>
    <property type="match status" value="1"/>
</dbReference>
<dbReference type="PROSITE" id="PS00631">
    <property type="entry name" value="CYTOSOL_AP"/>
    <property type="match status" value="1"/>
</dbReference>
<sequence length="427" mass="46327">MTEAMKITLSTQPADARWGDKATYSINNDGITLHLNGKDDLGLIQRAARKIDGLGIKQVALTGEGWDTERCWAFWAGYKGPKGVRTVMWPDLDDAQRQELDNRLTIIDWVRDTINAPAEELGPEQLAQRAVDLLCSVACDSVTYRITKGEDLREQNYMGLHTVGRGSERPPVLLALDYNPTGDKDAPVYACLVGKGITFDSGGYSIKQSAFMDSMKSDMGGAATVTGALAFAITRGLNKRVKLFLCCADNLISGNAFKLGDIIRYRNGKNAEVMNTDAEGRLVLADGLIDASAQHPQLIIDMATLTGAAKTALGNDYHALFSFDDTLAGRLLTSAAQENEPFWRLPLAEFHRNQLPSNFAELNNTGSAAYPAGASTAAGFLSHFVENYREGWLHIDCSATYRKAPVEQWAAGATGLGVRTIANLLTA</sequence>
<gene>
    <name evidence="1" type="primary">pepB</name>
    <name type="ordered locus">SCH_2531</name>
</gene>
<evidence type="ECO:0000255" key="1">
    <source>
        <dbReference type="HAMAP-Rule" id="MF_00504"/>
    </source>
</evidence>
<evidence type="ECO:0000305" key="2"/>
<keyword id="KW-0031">Aminopeptidase</keyword>
<keyword id="KW-0963">Cytoplasm</keyword>
<keyword id="KW-0378">Hydrolase</keyword>
<keyword id="KW-0464">Manganese</keyword>
<keyword id="KW-0479">Metal-binding</keyword>
<keyword id="KW-0645">Protease</keyword>
<name>PEPB_SALCH</name>
<comment type="function">
    <text evidence="1">Probably plays an important role in intracellular peptide degradation.</text>
</comment>
<comment type="catalytic activity">
    <reaction evidence="1">
        <text>Release of an N-terminal amino acid, Xaa, from a peptide or arylamide. Xaa is preferably Glu or Asp but may be other amino acids, including Leu, Met, His, Cys and Gln.</text>
        <dbReference type="EC" id="3.4.11.23"/>
    </reaction>
</comment>
<comment type="cofactor">
    <cofactor evidence="1">
        <name>Mn(2+)</name>
        <dbReference type="ChEBI" id="CHEBI:29035"/>
    </cofactor>
    <text evidence="1">Binds 2 manganese ions per subunit.</text>
</comment>
<comment type="subunit">
    <text evidence="1">Homohexamer.</text>
</comment>
<comment type="subcellular location">
    <subcellularLocation>
        <location evidence="1">Cytoplasm</location>
    </subcellularLocation>
</comment>
<comment type="similarity">
    <text evidence="1">Belongs to the peptidase M17 family.</text>
</comment>
<comment type="sequence caution" evidence="2">
    <conflict type="erroneous initiation">
        <sequence resource="EMBL-CDS" id="AAX66437"/>
    </conflict>
</comment>
<accession>Q57LH5</accession>
<organism>
    <name type="scientific">Salmonella choleraesuis (strain SC-B67)</name>
    <dbReference type="NCBI Taxonomy" id="321314"/>
    <lineage>
        <taxon>Bacteria</taxon>
        <taxon>Pseudomonadati</taxon>
        <taxon>Pseudomonadota</taxon>
        <taxon>Gammaproteobacteria</taxon>
        <taxon>Enterobacterales</taxon>
        <taxon>Enterobacteriaceae</taxon>
        <taxon>Salmonella</taxon>
    </lineage>
</organism>
<proteinExistence type="inferred from homology"/>